<keyword id="KW-0025">Alternative splicing</keyword>
<keyword id="KW-1015">Disulfide bond</keyword>
<keyword id="KW-0325">Glycoprotein</keyword>
<keyword id="KW-0328">Glycosyltransferase</keyword>
<keyword id="KW-0978">Insecticide resistance</keyword>
<keyword id="KW-0464">Manganese</keyword>
<keyword id="KW-0472">Membrane</keyword>
<keyword id="KW-0479">Metal-binding</keyword>
<keyword id="KW-1185">Reference proteome</keyword>
<keyword id="KW-0735">Signal-anchor</keyword>
<keyword id="KW-0808">Transferase</keyword>
<keyword id="KW-0812">Transmembrane</keyword>
<keyword id="KW-1133">Transmembrane helix</keyword>
<dbReference type="EC" id="2.4.1.-"/>
<dbReference type="EMBL" id="AY130767">
    <property type="protein sequence ID" value="AAM95168.1"/>
    <property type="molecule type" value="mRNA"/>
</dbReference>
<dbReference type="EMBL" id="AY533306">
    <property type="protein sequence ID" value="AAS21308.1"/>
    <property type="molecule type" value="mRNA"/>
</dbReference>
<dbReference type="EMBL" id="FO081821">
    <property type="protein sequence ID" value="CCD73531.1"/>
    <property type="molecule type" value="Genomic_DNA"/>
</dbReference>
<dbReference type="EMBL" id="FO081821">
    <property type="protein sequence ID" value="CDM63463.1"/>
    <property type="molecule type" value="Genomic_DNA"/>
</dbReference>
<dbReference type="RefSeq" id="NP_001293407.1">
    <property type="nucleotide sequence ID" value="NM_001306478.1"/>
</dbReference>
<dbReference type="RefSeq" id="NP_001370927.1">
    <molecule id="Q9GUM2-2"/>
    <property type="nucleotide sequence ID" value="NM_001383737.2"/>
</dbReference>
<dbReference type="RefSeq" id="NP_490872.1">
    <molecule id="Q9GUM2-1"/>
    <property type="nucleotide sequence ID" value="NM_058471.2"/>
</dbReference>
<dbReference type="SMR" id="Q9GUM2"/>
<dbReference type="BioGRID" id="55247">
    <property type="interactions" value="1"/>
</dbReference>
<dbReference type="FunCoup" id="Q9GUM2">
    <property type="interactions" value="2293"/>
</dbReference>
<dbReference type="STRING" id="6239.Y73E7A.7a.1"/>
<dbReference type="CAZy" id="GT7">
    <property type="family name" value="Glycosyltransferase Family 7"/>
</dbReference>
<dbReference type="GlyCosmos" id="Q9GUM2">
    <property type="glycosylation" value="5 sites, No reported glycans"/>
</dbReference>
<dbReference type="PaxDb" id="6239-Y73E7A.7"/>
<dbReference type="PeptideAtlas" id="Q9GUM2"/>
<dbReference type="EnsemblMetazoa" id="Y73E7A.7a.1">
    <molecule id="Q9GUM2-1"/>
    <property type="protein sequence ID" value="Y73E7A.7a.1"/>
    <property type="gene ID" value="WBGene00000269"/>
</dbReference>
<dbReference type="EnsemblMetazoa" id="Y73E7A.7a.2">
    <molecule id="Q9GUM2-1"/>
    <property type="protein sequence ID" value="Y73E7A.7a.2"/>
    <property type="gene ID" value="WBGene00000269"/>
</dbReference>
<dbReference type="EnsemblMetazoa" id="Y73E7A.7b.1">
    <molecule id="Q9GUM2-2"/>
    <property type="protein sequence ID" value="Y73E7A.7b.1"/>
    <property type="gene ID" value="WBGene00000269"/>
</dbReference>
<dbReference type="GeneID" id="190668"/>
<dbReference type="KEGG" id="cel:CELE_Y73E7A.7"/>
<dbReference type="UCSC" id="Y73E7A.7">
    <molecule id="Q9GUM2-1"/>
    <property type="organism name" value="c. elegans"/>
</dbReference>
<dbReference type="AGR" id="WB:WBGene00000269"/>
<dbReference type="CTD" id="190668"/>
<dbReference type="WormBase" id="Y73E7A.7a">
    <molecule id="Q9GUM2-1"/>
    <property type="protein sequence ID" value="CE26412"/>
    <property type="gene ID" value="WBGene00000269"/>
    <property type="gene designation" value="bre-4"/>
</dbReference>
<dbReference type="WormBase" id="Y73E7A.7b">
    <molecule id="Q9GUM2-2"/>
    <property type="protein sequence ID" value="CE49566"/>
    <property type="gene ID" value="WBGene00000269"/>
    <property type="gene designation" value="bre-4"/>
</dbReference>
<dbReference type="eggNOG" id="KOG3916">
    <property type="taxonomic scope" value="Eukaryota"/>
</dbReference>
<dbReference type="GeneTree" id="ENSGT00940000163971"/>
<dbReference type="HOGENOM" id="CLU_044391_3_1_1"/>
<dbReference type="InParanoid" id="Q9GUM2"/>
<dbReference type="OMA" id="GEQPRHF"/>
<dbReference type="OrthoDB" id="10038994at2759"/>
<dbReference type="PhylomeDB" id="Q9GUM2"/>
<dbReference type="UniPathway" id="UPA00378"/>
<dbReference type="PRO" id="PR:Q9GUM2"/>
<dbReference type="Proteomes" id="UP000001940">
    <property type="component" value="Chromosome I"/>
</dbReference>
<dbReference type="Bgee" id="WBGene00000269">
    <property type="expression patterns" value="Expressed in adult organism and 4 other cell types or tissues"/>
</dbReference>
<dbReference type="GO" id="GO:0005794">
    <property type="term" value="C:Golgi apparatus"/>
    <property type="evidence" value="ECO:0000318"/>
    <property type="project" value="GO_Central"/>
</dbReference>
<dbReference type="GO" id="GO:0016020">
    <property type="term" value="C:membrane"/>
    <property type="evidence" value="ECO:0007669"/>
    <property type="project" value="UniProtKB-SubCell"/>
</dbReference>
<dbReference type="GO" id="GO:0008376">
    <property type="term" value="F:acetylgalactosaminyltransferase activity"/>
    <property type="evidence" value="ECO:0000314"/>
    <property type="project" value="UniProtKB"/>
</dbReference>
<dbReference type="GO" id="GO:0046872">
    <property type="term" value="F:metal ion binding"/>
    <property type="evidence" value="ECO:0007669"/>
    <property type="project" value="UniProtKB-KW"/>
</dbReference>
<dbReference type="GO" id="GO:0033842">
    <property type="term" value="F:N-acetyl-beta-glucosaminyl-derivative 4-beta-N-acetylgalactosaminyltransferase activity"/>
    <property type="evidence" value="ECO:0000314"/>
    <property type="project" value="WormBase"/>
</dbReference>
<dbReference type="GO" id="GO:0005975">
    <property type="term" value="P:carbohydrate metabolic process"/>
    <property type="evidence" value="ECO:0007669"/>
    <property type="project" value="InterPro"/>
</dbReference>
<dbReference type="GO" id="GO:0006688">
    <property type="term" value="P:glycosphingolipid biosynthetic process"/>
    <property type="evidence" value="ECO:0000318"/>
    <property type="project" value="GO_Central"/>
</dbReference>
<dbReference type="GO" id="GO:0045747">
    <property type="term" value="P:positive regulation of Notch signaling pathway"/>
    <property type="evidence" value="ECO:0000316"/>
    <property type="project" value="WormBase"/>
</dbReference>
<dbReference type="GO" id="GO:0006486">
    <property type="term" value="P:protein glycosylation"/>
    <property type="evidence" value="ECO:0000314"/>
    <property type="project" value="WormBase"/>
</dbReference>
<dbReference type="GO" id="GO:0009636">
    <property type="term" value="P:response to toxic substance"/>
    <property type="evidence" value="ECO:0000315"/>
    <property type="project" value="WormBase"/>
</dbReference>
<dbReference type="CDD" id="cd00899">
    <property type="entry name" value="b4GalT"/>
    <property type="match status" value="1"/>
</dbReference>
<dbReference type="FunFam" id="3.90.550.10:FF:000037">
    <property type="entry name" value="Beta-1,4-galactosyltransferase 6"/>
    <property type="match status" value="1"/>
</dbReference>
<dbReference type="Gene3D" id="3.90.550.10">
    <property type="entry name" value="Spore Coat Polysaccharide Biosynthesis Protein SpsA, Chain A"/>
    <property type="match status" value="1"/>
</dbReference>
<dbReference type="InterPro" id="IPR003859">
    <property type="entry name" value="Galactosyl_T"/>
</dbReference>
<dbReference type="InterPro" id="IPR027791">
    <property type="entry name" value="Galactosyl_T_C"/>
</dbReference>
<dbReference type="InterPro" id="IPR027995">
    <property type="entry name" value="Galactosyl_T_N"/>
</dbReference>
<dbReference type="InterPro" id="IPR029044">
    <property type="entry name" value="Nucleotide-diphossugar_trans"/>
</dbReference>
<dbReference type="PANTHER" id="PTHR19300">
    <property type="entry name" value="BETA-1,4-GALACTOSYLTRANSFERASE"/>
    <property type="match status" value="1"/>
</dbReference>
<dbReference type="PANTHER" id="PTHR19300:SF57">
    <property type="entry name" value="BETA-1,4-N-ACETYLGALACTOSAMINYLTRANSFERASE"/>
    <property type="match status" value="1"/>
</dbReference>
<dbReference type="Pfam" id="PF02709">
    <property type="entry name" value="Glyco_transf_7C"/>
    <property type="match status" value="1"/>
</dbReference>
<dbReference type="Pfam" id="PF13733">
    <property type="entry name" value="Glyco_transf_7N"/>
    <property type="match status" value="1"/>
</dbReference>
<dbReference type="PRINTS" id="PR02050">
    <property type="entry name" value="B14GALTRFASE"/>
</dbReference>
<dbReference type="SUPFAM" id="SSF53448">
    <property type="entry name" value="Nucleotide-diphospho-sugar transferases"/>
    <property type="match status" value="1"/>
</dbReference>
<reference evidence="6 7" key="1">
    <citation type="journal article" date="2002" name="J. Biol. Chem.">
        <title>Molecular cloning and enzymatic characterization of a UDP-GalNAc:GlcNAc(beta)-R beta1,4-N-acetylgalactosaminyltransferase from Caenorhabditis elegans.</title>
        <authorList>
            <person name="Kawar Z.S."/>
            <person name="Van Die I."/>
            <person name="Cummings R.D."/>
        </authorList>
    </citation>
    <scope>NUCLEOTIDE SEQUENCE [MRNA] (ISOFORM A)</scope>
    <scope>FUNCTION</scope>
    <scope>PATHWAY</scope>
</reference>
<reference evidence="6 8" key="2">
    <citation type="journal article" date="2003" name="J. Biol. Chem.">
        <title>Resistance to a bacterial toxin is mediated by removal of a conserved glycosylation pathway required for toxin-host interactions.</title>
        <authorList>
            <person name="Griffitts J.S."/>
            <person name="Huffman D.L."/>
            <person name="Whitacre J.L."/>
            <person name="Barrows B.D."/>
            <person name="Marroquin L.D."/>
            <person name="Mueller R."/>
            <person name="Brown J.R."/>
            <person name="Hennet T."/>
            <person name="Esko J.D."/>
            <person name="Aroian R.V."/>
        </authorList>
    </citation>
    <scope>NUCLEOTIDE SEQUENCE [MRNA] (ISOFORM A)</scope>
    <scope>FUNCTION</scope>
    <scope>MUTAGENESIS OF GLY-260</scope>
    <scope>DISRUPTION PHENOTYPE</scope>
</reference>
<reference evidence="6" key="3">
    <citation type="journal article" date="1998" name="Science">
        <title>Genome sequence of the nematode C. elegans: a platform for investigating biology.</title>
        <authorList>
            <consortium name="The C. elegans sequencing consortium"/>
        </authorList>
    </citation>
    <scope>NUCLEOTIDE SEQUENCE [LARGE SCALE GENOMIC DNA]</scope>
    <scope>ALTERNATIVE SPLICING</scope>
    <source>
        <strain>Bristol N2</strain>
    </source>
</reference>
<reference evidence="6" key="4">
    <citation type="journal article" date="2000" name="Genetics">
        <title>Bacillus thuringiensis (Bt) toxin susceptibility and isolation of resistance mutants in the nematode Caenorhabditis elegans.</title>
        <authorList>
            <person name="Marroquin L.D."/>
            <person name="Elyassnia D."/>
            <person name="Griffitts J.S."/>
            <person name="Feitelson J.S."/>
            <person name="Aroian R.V."/>
        </authorList>
    </citation>
    <scope>IDENTIFICATION</scope>
    <scope>FUNCTION</scope>
    <scope>DISRUPTION PHENOTYPE</scope>
</reference>
<organism>
    <name type="scientific">Caenorhabditis elegans</name>
    <dbReference type="NCBI Taxonomy" id="6239"/>
    <lineage>
        <taxon>Eukaryota</taxon>
        <taxon>Metazoa</taxon>
        <taxon>Ecdysozoa</taxon>
        <taxon>Nematoda</taxon>
        <taxon>Chromadorea</taxon>
        <taxon>Rhabditida</taxon>
        <taxon>Rhabditina</taxon>
        <taxon>Rhabditomorpha</taxon>
        <taxon>Rhabditoidea</taxon>
        <taxon>Rhabditidae</taxon>
        <taxon>Peloderinae</taxon>
        <taxon>Caenorhabditis</taxon>
    </lineage>
</organism>
<feature type="chain" id="PRO_0000324671" description="Beta-1,4-N-acetylgalactosaminyltransferase bre-4">
    <location>
        <begin position="1"/>
        <end position="383"/>
    </location>
</feature>
<feature type="topological domain" description="Cytoplasmic" evidence="2">
    <location>
        <begin position="1"/>
        <end position="6"/>
    </location>
</feature>
<feature type="transmembrane region" description="Helical; Signal-anchor for type II membrane protein" evidence="2">
    <location>
        <begin position="7"/>
        <end position="29"/>
    </location>
</feature>
<feature type="topological domain" description="Extracellular" evidence="2">
    <location>
        <begin position="30"/>
        <end position="383"/>
    </location>
</feature>
<feature type="binding site" evidence="1">
    <location>
        <position position="222"/>
    </location>
    <ligand>
        <name>Mn(2+)</name>
        <dbReference type="ChEBI" id="CHEBI:29035"/>
    </ligand>
</feature>
<feature type="binding site" evidence="1">
    <location>
        <position position="315"/>
    </location>
    <ligand>
        <name>Mn(2+)</name>
        <dbReference type="ChEBI" id="CHEBI:29035"/>
    </ligand>
</feature>
<feature type="glycosylation site" description="N-linked (GlcNAc...) asparagine" evidence="2">
    <location>
        <position position="37"/>
    </location>
</feature>
<feature type="glycosylation site" description="N-linked (GlcNAc...) asparagine" evidence="2">
    <location>
        <position position="71"/>
    </location>
</feature>
<feature type="glycosylation site" description="N-linked (GlcNAc...) asparagine" evidence="2">
    <location>
        <position position="81"/>
    </location>
</feature>
<feature type="glycosylation site" description="N-linked (GlcNAc...) asparagine" evidence="2">
    <location>
        <position position="97"/>
    </location>
</feature>
<feature type="glycosylation site" description="N-linked (GlcNAc...) asparagine" evidence="2">
    <location>
        <position position="191"/>
    </location>
</feature>
<feature type="disulfide bond" evidence="1">
    <location>
        <begin position="103"/>
        <end position="144"/>
    </location>
</feature>
<feature type="disulfide bond" evidence="1">
    <location>
        <begin position="215"/>
        <end position="234"/>
    </location>
</feature>
<feature type="splice variant" id="VSP_054965" description="In isoform b." evidence="6">
    <location>
        <begin position="1"/>
        <end position="165"/>
    </location>
</feature>
<feature type="mutagenesis site" description="In ye43; resistant to Bacillus thuringiensis crystal5B toxin." evidence="5">
    <original>G</original>
    <variation>R</variation>
    <location>
        <position position="260"/>
    </location>
</feature>
<accession>Q9GUM2</accession>
<accession>W6SB74</accession>
<comment type="function">
    <text evidence="3 4 5">Catalyzes the transfer of galactose onto proteins or lipids. Required for susceptibility to pore-forming crystal toxins in conjunction with bre-1, bre-2, bre-3 and bre-5.</text>
</comment>
<comment type="cofactor">
    <cofactor evidence="1">
        <name>Mn(2+)</name>
        <dbReference type="ChEBI" id="CHEBI:29035"/>
    </cofactor>
</comment>
<comment type="pathway">
    <text evidence="4 5">Protein modification; protein glycosylation.</text>
</comment>
<comment type="subcellular location">
    <subcellularLocation>
        <location evidence="2">Membrane</location>
        <topology evidence="2">Single-pass type II membrane protein</topology>
    </subcellularLocation>
</comment>
<comment type="alternative products">
    <event type="alternative splicing"/>
    <isoform>
        <id>Q9GUM2-1</id>
        <name>a</name>
        <sequence type="displayed"/>
    </isoform>
    <isoform>
        <id>Q9GUM2-2</id>
        <name>b</name>
        <sequence type="described" ref="VSP_054965"/>
    </isoform>
</comment>
<comment type="disruption phenotype">
    <text evidence="3 5">Worms exhibit resistance to the Cry5B toxin produced by Bacillus thuringiensis. This is thought to be due to mutants having reduced population of glycolipids which are targeted by the Cry5B protein.</text>
</comment>
<comment type="similarity">
    <text evidence="2">Belongs to the glycosyltransferase 7 family.</text>
</comment>
<protein>
    <recommendedName>
        <fullName>Beta-1,4-N-acetylgalactosaminyltransferase bre-4</fullName>
        <ecNumber>2.4.1.-</ecNumber>
    </recommendedName>
    <alternativeName>
        <fullName>Bacillus thuringiensis toxin-resistant protein 4</fullName>
        <shortName>Bt toxin-resistant protein 4</shortName>
    </alternativeName>
    <alternativeName>
        <fullName>Beta-4-GalNAcT</fullName>
    </alternativeName>
</protein>
<proteinExistence type="evidence at protein level"/>
<evidence type="ECO:0000250" key="1">
    <source>
        <dbReference type="UniProtKB" id="P08037"/>
    </source>
</evidence>
<evidence type="ECO:0000255" key="2"/>
<evidence type="ECO:0000269" key="3">
    <source>
    </source>
</evidence>
<evidence type="ECO:0000269" key="4">
    <source>
    </source>
</evidence>
<evidence type="ECO:0000269" key="5">
    <source>
    </source>
</evidence>
<evidence type="ECO:0000305" key="6"/>
<evidence type="ECO:0000312" key="7">
    <source>
        <dbReference type="EMBL" id="AAM95168.1"/>
    </source>
</evidence>
<evidence type="ECO:0000312" key="8">
    <source>
        <dbReference type="EMBL" id="AAS21308.1"/>
    </source>
</evidence>
<evidence type="ECO:0000312" key="9">
    <source>
        <dbReference type="WormBase" id="Y73E7A.7a"/>
    </source>
</evidence>
<sequence>MAFRHLAVARLKSLLVLCAVLLLVHAMIYKIPSLYENLTIGSSTLIADVDAMEAVLGNTASTSDDLLDTWNSTFSPISEVNQTSFMEDIRPILFPDNQTLQFCNQTPPHLVGPIRVFLDEPDFKTLEKIYPDTHAGGHGMPKDCVARHRVAIIVPYRDREAHLRIMLHNLHSLLAKQQLDYAIFIVEQVANQTFNRGKLMNVGYDVASRLYPWQCFIFHDVDLLPEDDRNLYTCPIQPRHMSVAIDKFNYKLPYSAIFGGISALTKDHLKKINGFSNDFWGWGGEDDDLATRTSMAGLKVSRYPTQIARYKMIKHSTEATNPVNKCRYKIMGQTKRRWTRDGLSNLKYKLVNLELKPLYTRAVVDLLEKDCRRELRRDFPTCF</sequence>
<name>BRE4_CAEEL</name>
<gene>
    <name evidence="9" type="primary">bre-4</name>
    <name type="ORF">Y73E7A.7</name>
</gene>